<evidence type="ECO:0000255" key="1">
    <source>
        <dbReference type="HAMAP-Rule" id="MF_01281"/>
    </source>
</evidence>
<dbReference type="EC" id="3.5.4.28" evidence="1"/>
<dbReference type="EC" id="3.5.4.31" evidence="1"/>
<dbReference type="EMBL" id="CP001186">
    <property type="protein sequence ID" value="ACK96315.1"/>
    <property type="molecule type" value="Genomic_DNA"/>
</dbReference>
<dbReference type="SMR" id="B7IS56"/>
<dbReference type="KEGG" id="bcg:BCG9842_B3476"/>
<dbReference type="HOGENOM" id="CLU_012358_2_1_9"/>
<dbReference type="Proteomes" id="UP000006744">
    <property type="component" value="Chromosome"/>
</dbReference>
<dbReference type="GO" id="GO:0090614">
    <property type="term" value="F:5'-methylthioadenosine deaminase activity"/>
    <property type="evidence" value="ECO:0007669"/>
    <property type="project" value="UniProtKB-UniRule"/>
</dbReference>
<dbReference type="GO" id="GO:0046872">
    <property type="term" value="F:metal ion binding"/>
    <property type="evidence" value="ECO:0007669"/>
    <property type="project" value="UniProtKB-KW"/>
</dbReference>
<dbReference type="GO" id="GO:0050270">
    <property type="term" value="F:S-adenosylhomocysteine deaminase activity"/>
    <property type="evidence" value="ECO:0007669"/>
    <property type="project" value="UniProtKB-UniRule"/>
</dbReference>
<dbReference type="CDD" id="cd01298">
    <property type="entry name" value="ATZ_TRZ_like"/>
    <property type="match status" value="1"/>
</dbReference>
<dbReference type="FunFam" id="3.20.20.140:FF:000014">
    <property type="entry name" value="5-methylthioadenosine/S-adenosylhomocysteine deaminase"/>
    <property type="match status" value="1"/>
</dbReference>
<dbReference type="Gene3D" id="3.20.20.140">
    <property type="entry name" value="Metal-dependent hydrolases"/>
    <property type="match status" value="1"/>
</dbReference>
<dbReference type="Gene3D" id="2.30.40.10">
    <property type="entry name" value="Urease, subunit C, domain 1"/>
    <property type="match status" value="1"/>
</dbReference>
<dbReference type="HAMAP" id="MF_01281">
    <property type="entry name" value="MTA_SAH_deamin"/>
    <property type="match status" value="1"/>
</dbReference>
<dbReference type="InterPro" id="IPR006680">
    <property type="entry name" value="Amidohydro-rel"/>
</dbReference>
<dbReference type="InterPro" id="IPR023512">
    <property type="entry name" value="Deaminase_MtaD/DadD"/>
</dbReference>
<dbReference type="InterPro" id="IPR011059">
    <property type="entry name" value="Metal-dep_hydrolase_composite"/>
</dbReference>
<dbReference type="InterPro" id="IPR032466">
    <property type="entry name" value="Metal_Hydrolase"/>
</dbReference>
<dbReference type="InterPro" id="IPR050287">
    <property type="entry name" value="MTA/SAH_deaminase"/>
</dbReference>
<dbReference type="NCBIfam" id="NF012037">
    <property type="entry name" value="PRK15493.1"/>
    <property type="match status" value="1"/>
</dbReference>
<dbReference type="PANTHER" id="PTHR43794:SF11">
    <property type="entry name" value="AMIDOHYDROLASE-RELATED DOMAIN-CONTAINING PROTEIN"/>
    <property type="match status" value="1"/>
</dbReference>
<dbReference type="PANTHER" id="PTHR43794">
    <property type="entry name" value="AMINOHYDROLASE SSNA-RELATED"/>
    <property type="match status" value="1"/>
</dbReference>
<dbReference type="Pfam" id="PF01979">
    <property type="entry name" value="Amidohydro_1"/>
    <property type="match status" value="1"/>
</dbReference>
<dbReference type="SUPFAM" id="SSF51338">
    <property type="entry name" value="Composite domain of metallo-dependent hydrolases"/>
    <property type="match status" value="1"/>
</dbReference>
<dbReference type="SUPFAM" id="SSF51556">
    <property type="entry name" value="Metallo-dependent hydrolases"/>
    <property type="match status" value="1"/>
</dbReference>
<proteinExistence type="inferred from homology"/>
<gene>
    <name evidence="1" type="primary">mtaD</name>
    <name type="ordered locus">BCG9842_B3476</name>
</gene>
<protein>
    <recommendedName>
        <fullName evidence="1">5-methylthioadenosine/S-adenosylhomocysteine deaminase</fullName>
        <shortName evidence="1">MTA/SAH deaminase</shortName>
        <ecNumber evidence="1">3.5.4.28</ecNumber>
        <ecNumber evidence="1">3.5.4.31</ecNumber>
    </recommendedName>
</protein>
<keyword id="KW-0378">Hydrolase</keyword>
<keyword id="KW-0479">Metal-binding</keyword>
<keyword id="KW-0862">Zinc</keyword>
<comment type="function">
    <text evidence="1">Catalyzes the deamination of 5-methylthioadenosine and S-adenosyl-L-homocysteine into 5-methylthioinosine and S-inosyl-L-homocysteine, respectively. Is also able to deaminate adenosine.</text>
</comment>
<comment type="catalytic activity">
    <reaction evidence="1">
        <text>S-adenosyl-L-homocysteine + H2O + H(+) = S-inosyl-L-homocysteine + NH4(+)</text>
        <dbReference type="Rhea" id="RHEA:20716"/>
        <dbReference type="ChEBI" id="CHEBI:15377"/>
        <dbReference type="ChEBI" id="CHEBI:15378"/>
        <dbReference type="ChEBI" id="CHEBI:28938"/>
        <dbReference type="ChEBI" id="CHEBI:57856"/>
        <dbReference type="ChEBI" id="CHEBI:57985"/>
        <dbReference type="EC" id="3.5.4.28"/>
    </reaction>
</comment>
<comment type="catalytic activity">
    <reaction evidence="1">
        <text>S-methyl-5'-thioadenosine + H2O + H(+) = S-methyl-5'-thioinosine + NH4(+)</text>
        <dbReference type="Rhea" id="RHEA:25025"/>
        <dbReference type="ChEBI" id="CHEBI:15377"/>
        <dbReference type="ChEBI" id="CHEBI:15378"/>
        <dbReference type="ChEBI" id="CHEBI:17509"/>
        <dbReference type="ChEBI" id="CHEBI:28938"/>
        <dbReference type="ChEBI" id="CHEBI:48595"/>
        <dbReference type="EC" id="3.5.4.31"/>
    </reaction>
</comment>
<comment type="cofactor">
    <cofactor evidence="1">
        <name>Zn(2+)</name>
        <dbReference type="ChEBI" id="CHEBI:29105"/>
    </cofactor>
    <text evidence="1">Binds 1 zinc ion per subunit.</text>
</comment>
<comment type="similarity">
    <text evidence="1">Belongs to the metallo-dependent hydrolases superfamily. MTA/SAH deaminase family.</text>
</comment>
<feature type="chain" id="PRO_1000140346" description="5-methylthioadenosine/S-adenosylhomocysteine deaminase">
    <location>
        <begin position="1"/>
        <end position="435"/>
    </location>
</feature>
<feature type="binding site" evidence="1">
    <location>
        <position position="65"/>
    </location>
    <ligand>
        <name>Zn(2+)</name>
        <dbReference type="ChEBI" id="CHEBI:29105"/>
    </ligand>
</feature>
<feature type="binding site" evidence="1">
    <location>
        <position position="67"/>
    </location>
    <ligand>
        <name>Zn(2+)</name>
        <dbReference type="ChEBI" id="CHEBI:29105"/>
    </ligand>
</feature>
<feature type="binding site" evidence="1">
    <location>
        <position position="94"/>
    </location>
    <ligand>
        <name>substrate</name>
    </ligand>
</feature>
<feature type="binding site" evidence="1">
    <location>
        <position position="150"/>
    </location>
    <ligand>
        <name>substrate</name>
    </ligand>
</feature>
<feature type="binding site" evidence="1">
    <location>
        <position position="189"/>
    </location>
    <ligand>
        <name>substrate</name>
    </ligand>
</feature>
<feature type="binding site" evidence="1">
    <location>
        <position position="216"/>
    </location>
    <ligand>
        <name>Zn(2+)</name>
        <dbReference type="ChEBI" id="CHEBI:29105"/>
    </ligand>
</feature>
<feature type="binding site" evidence="1">
    <location>
        <position position="219"/>
    </location>
    <ligand>
        <name>substrate</name>
    </ligand>
</feature>
<feature type="binding site" evidence="1">
    <location>
        <position position="304"/>
    </location>
    <ligand>
        <name>substrate</name>
    </ligand>
</feature>
<feature type="binding site" evidence="1">
    <location>
        <position position="304"/>
    </location>
    <ligand>
        <name>Zn(2+)</name>
        <dbReference type="ChEBI" id="CHEBI:29105"/>
    </ligand>
</feature>
<accession>B7IS56</accession>
<name>MTAD_BACC2</name>
<sequence length="435" mass="48171">MKTTYVNATIVTMNEQNEVIENGYIIVENDQIIDVKSGEFANDFEVDEVIDMKGKWVLPGLVNTHTHVVMSLLRGIGDDMLLQPWLETRIWPLESQFTPELAVASTELGLLEMVKSGTTSFSDMFNPIGVDQDAIMETVSRSGMRAAVSRTLFSFGTKDDEKKAIEEAEKYVKRYYKESGMLTTMVAPHSPYTCSTELLEECARIAVENQTMVHIHLSETEREVRDIEAQYGKRPVEYAASCGLFKRPTVIAHGVVLNENERAFLAEHDVRVAHNPNSNLKLGSGIANVKAMLEAGMKVGIATDSVASNNNLDMFEEMRIATLLQKGIHQDATALPVETALTLATKGAAEVIGMKQTGSLEVGKCADFITIDPSNKPHLQPADEVLSHLVYAASGKDISDVIINGKRVVWNGECKTLDEERIIFEASRYKRGLQR</sequence>
<organism>
    <name type="scientific">Bacillus cereus (strain G9842)</name>
    <dbReference type="NCBI Taxonomy" id="405531"/>
    <lineage>
        <taxon>Bacteria</taxon>
        <taxon>Bacillati</taxon>
        <taxon>Bacillota</taxon>
        <taxon>Bacilli</taxon>
        <taxon>Bacillales</taxon>
        <taxon>Bacillaceae</taxon>
        <taxon>Bacillus</taxon>
        <taxon>Bacillus cereus group</taxon>
    </lineage>
</organism>
<reference key="1">
    <citation type="submission" date="2008-10" db="EMBL/GenBank/DDBJ databases">
        <title>Genome sequence of Bacillus cereus G9842.</title>
        <authorList>
            <person name="Dodson R.J."/>
            <person name="Durkin A.S."/>
            <person name="Rosovitz M.J."/>
            <person name="Rasko D.A."/>
            <person name="Hoffmaster A."/>
            <person name="Ravel J."/>
            <person name="Sutton G."/>
        </authorList>
    </citation>
    <scope>NUCLEOTIDE SEQUENCE [LARGE SCALE GENOMIC DNA]</scope>
    <source>
        <strain>G9842</strain>
    </source>
</reference>